<name>DNLJ_PHYAS</name>
<evidence type="ECO:0000255" key="1">
    <source>
        <dbReference type="HAMAP-Rule" id="MF_01588"/>
    </source>
</evidence>
<organism>
    <name type="scientific">Phytoplasma australiense</name>
    <dbReference type="NCBI Taxonomy" id="59748"/>
    <lineage>
        <taxon>Bacteria</taxon>
        <taxon>Bacillati</taxon>
        <taxon>Mycoplasmatota</taxon>
        <taxon>Mollicutes</taxon>
        <taxon>Acholeplasmatales</taxon>
        <taxon>Acholeplasmataceae</taxon>
        <taxon>Candidatus Phytoplasma</taxon>
        <taxon>16SrXII (Stolbur group)</taxon>
    </lineage>
</organism>
<gene>
    <name evidence="1" type="primary">ligA</name>
    <name type="ordered locus">PA0770</name>
</gene>
<keyword id="KW-0227">DNA damage</keyword>
<keyword id="KW-0234">DNA repair</keyword>
<keyword id="KW-0235">DNA replication</keyword>
<keyword id="KW-0436">Ligase</keyword>
<keyword id="KW-0460">Magnesium</keyword>
<keyword id="KW-0464">Manganese</keyword>
<keyword id="KW-0479">Metal-binding</keyword>
<keyword id="KW-0520">NAD</keyword>
<keyword id="KW-1185">Reference proteome</keyword>
<keyword id="KW-0862">Zinc</keyword>
<proteinExistence type="inferred from homology"/>
<dbReference type="EC" id="6.5.1.2" evidence="1"/>
<dbReference type="EMBL" id="AM422018">
    <property type="protein sequence ID" value="CAM12104.1"/>
    <property type="molecule type" value="Genomic_DNA"/>
</dbReference>
<dbReference type="SMR" id="B1VAY1"/>
<dbReference type="STRING" id="59748.PA0770"/>
<dbReference type="KEGG" id="pal:PA0770"/>
<dbReference type="eggNOG" id="COG0272">
    <property type="taxonomic scope" value="Bacteria"/>
</dbReference>
<dbReference type="Proteomes" id="UP000008323">
    <property type="component" value="Chromosome"/>
</dbReference>
<dbReference type="GO" id="GO:0005829">
    <property type="term" value="C:cytosol"/>
    <property type="evidence" value="ECO:0007669"/>
    <property type="project" value="TreeGrafter"/>
</dbReference>
<dbReference type="GO" id="GO:0003911">
    <property type="term" value="F:DNA ligase (NAD+) activity"/>
    <property type="evidence" value="ECO:0007669"/>
    <property type="project" value="UniProtKB-UniRule"/>
</dbReference>
<dbReference type="GO" id="GO:0046872">
    <property type="term" value="F:metal ion binding"/>
    <property type="evidence" value="ECO:0007669"/>
    <property type="project" value="UniProtKB-KW"/>
</dbReference>
<dbReference type="GO" id="GO:0006281">
    <property type="term" value="P:DNA repair"/>
    <property type="evidence" value="ECO:0007669"/>
    <property type="project" value="UniProtKB-KW"/>
</dbReference>
<dbReference type="GO" id="GO:0006260">
    <property type="term" value="P:DNA replication"/>
    <property type="evidence" value="ECO:0007669"/>
    <property type="project" value="UniProtKB-KW"/>
</dbReference>
<dbReference type="CDD" id="cd17748">
    <property type="entry name" value="BRCT_DNA_ligase_like"/>
    <property type="match status" value="1"/>
</dbReference>
<dbReference type="CDD" id="cd00114">
    <property type="entry name" value="LIGANc"/>
    <property type="match status" value="1"/>
</dbReference>
<dbReference type="Gene3D" id="6.20.10.30">
    <property type="match status" value="1"/>
</dbReference>
<dbReference type="Gene3D" id="1.10.150.20">
    <property type="entry name" value="5' to 3' exonuclease, C-terminal subdomain"/>
    <property type="match status" value="2"/>
</dbReference>
<dbReference type="Gene3D" id="3.40.50.10190">
    <property type="entry name" value="BRCT domain"/>
    <property type="match status" value="1"/>
</dbReference>
<dbReference type="Gene3D" id="3.30.470.30">
    <property type="entry name" value="DNA ligase/mRNA capping enzyme"/>
    <property type="match status" value="1"/>
</dbReference>
<dbReference type="Gene3D" id="1.10.287.610">
    <property type="entry name" value="Helix hairpin bin"/>
    <property type="match status" value="1"/>
</dbReference>
<dbReference type="Gene3D" id="2.40.50.140">
    <property type="entry name" value="Nucleic acid-binding proteins"/>
    <property type="match status" value="1"/>
</dbReference>
<dbReference type="HAMAP" id="MF_01588">
    <property type="entry name" value="DNA_ligase_A"/>
    <property type="match status" value="1"/>
</dbReference>
<dbReference type="InterPro" id="IPR001357">
    <property type="entry name" value="BRCT_dom"/>
</dbReference>
<dbReference type="InterPro" id="IPR036420">
    <property type="entry name" value="BRCT_dom_sf"/>
</dbReference>
<dbReference type="InterPro" id="IPR041663">
    <property type="entry name" value="DisA/LigA_HHH"/>
</dbReference>
<dbReference type="InterPro" id="IPR001679">
    <property type="entry name" value="DNA_ligase"/>
</dbReference>
<dbReference type="InterPro" id="IPR018239">
    <property type="entry name" value="DNA_ligase_AS"/>
</dbReference>
<dbReference type="InterPro" id="IPR013839">
    <property type="entry name" value="DNAligase_adenylation"/>
</dbReference>
<dbReference type="InterPro" id="IPR013840">
    <property type="entry name" value="DNAligase_N"/>
</dbReference>
<dbReference type="InterPro" id="IPR012340">
    <property type="entry name" value="NA-bd_OB-fold"/>
</dbReference>
<dbReference type="InterPro" id="IPR004150">
    <property type="entry name" value="NAD_DNA_ligase_OB"/>
</dbReference>
<dbReference type="InterPro" id="IPR010994">
    <property type="entry name" value="RuvA_2-like"/>
</dbReference>
<dbReference type="InterPro" id="IPR004149">
    <property type="entry name" value="Znf_DNAligase_C4"/>
</dbReference>
<dbReference type="NCBIfam" id="TIGR00575">
    <property type="entry name" value="dnlj"/>
    <property type="match status" value="1"/>
</dbReference>
<dbReference type="NCBIfam" id="NF005932">
    <property type="entry name" value="PRK07956.1"/>
    <property type="match status" value="1"/>
</dbReference>
<dbReference type="PANTHER" id="PTHR23389">
    <property type="entry name" value="CHROMOSOME TRANSMISSION FIDELITY FACTOR 18"/>
    <property type="match status" value="1"/>
</dbReference>
<dbReference type="PANTHER" id="PTHR23389:SF9">
    <property type="entry name" value="DNA LIGASE"/>
    <property type="match status" value="1"/>
</dbReference>
<dbReference type="Pfam" id="PF00533">
    <property type="entry name" value="BRCT"/>
    <property type="match status" value="1"/>
</dbReference>
<dbReference type="Pfam" id="PF01653">
    <property type="entry name" value="DNA_ligase_aden"/>
    <property type="match status" value="1"/>
</dbReference>
<dbReference type="Pfam" id="PF03120">
    <property type="entry name" value="DNA_ligase_OB"/>
    <property type="match status" value="1"/>
</dbReference>
<dbReference type="Pfam" id="PF03119">
    <property type="entry name" value="DNA_ligase_ZBD"/>
    <property type="match status" value="1"/>
</dbReference>
<dbReference type="Pfam" id="PF12826">
    <property type="entry name" value="HHH_2"/>
    <property type="match status" value="1"/>
</dbReference>
<dbReference type="PIRSF" id="PIRSF001604">
    <property type="entry name" value="LigA"/>
    <property type="match status" value="1"/>
</dbReference>
<dbReference type="SMART" id="SM00292">
    <property type="entry name" value="BRCT"/>
    <property type="match status" value="1"/>
</dbReference>
<dbReference type="SMART" id="SM00532">
    <property type="entry name" value="LIGANc"/>
    <property type="match status" value="1"/>
</dbReference>
<dbReference type="SUPFAM" id="SSF52113">
    <property type="entry name" value="BRCT domain"/>
    <property type="match status" value="1"/>
</dbReference>
<dbReference type="SUPFAM" id="SSF56091">
    <property type="entry name" value="DNA ligase/mRNA capping enzyme, catalytic domain"/>
    <property type="match status" value="1"/>
</dbReference>
<dbReference type="SUPFAM" id="SSF50249">
    <property type="entry name" value="Nucleic acid-binding proteins"/>
    <property type="match status" value="1"/>
</dbReference>
<dbReference type="SUPFAM" id="SSF47781">
    <property type="entry name" value="RuvA domain 2-like"/>
    <property type="match status" value="1"/>
</dbReference>
<dbReference type="PROSITE" id="PS50172">
    <property type="entry name" value="BRCT"/>
    <property type="match status" value="1"/>
</dbReference>
<dbReference type="PROSITE" id="PS01055">
    <property type="entry name" value="DNA_LIGASE_N1"/>
    <property type="match status" value="1"/>
</dbReference>
<accession>B1VAY1</accession>
<comment type="function">
    <text evidence="1">DNA ligase that catalyzes the formation of phosphodiester linkages between 5'-phosphoryl and 3'-hydroxyl groups in double-stranded DNA using NAD as a coenzyme and as the energy source for the reaction. It is essential for DNA replication and repair of damaged DNA.</text>
</comment>
<comment type="catalytic activity">
    <reaction evidence="1">
        <text>NAD(+) + (deoxyribonucleotide)n-3'-hydroxyl + 5'-phospho-(deoxyribonucleotide)m = (deoxyribonucleotide)n+m + AMP + beta-nicotinamide D-nucleotide.</text>
        <dbReference type="EC" id="6.5.1.2"/>
    </reaction>
</comment>
<comment type="cofactor">
    <cofactor evidence="1">
        <name>Mg(2+)</name>
        <dbReference type="ChEBI" id="CHEBI:18420"/>
    </cofactor>
    <cofactor evidence="1">
        <name>Mn(2+)</name>
        <dbReference type="ChEBI" id="CHEBI:29035"/>
    </cofactor>
</comment>
<comment type="similarity">
    <text evidence="1">Belongs to the NAD-dependent DNA ligase family. LigA subfamily.</text>
</comment>
<reference key="1">
    <citation type="journal article" date="2008" name="J. Bacteriol.">
        <title>Comparative genome analysis of 'Candidatus Phytoplasma australiense' (subgroup tuf-Australia I; rp-A) and 'Ca. Phytoplasma asteris' strains OY-M and AY-WB.</title>
        <authorList>
            <person name="Tran-Nguyen L.T."/>
            <person name="Kube M."/>
            <person name="Schneider B."/>
            <person name="Reinhardt R."/>
            <person name="Gibb K.S."/>
        </authorList>
    </citation>
    <scope>NUCLEOTIDE SEQUENCE [LARGE SCALE GENOMIC DNA]</scope>
</reference>
<feature type="chain" id="PRO_0000380440" description="DNA ligase">
    <location>
        <begin position="1"/>
        <end position="670"/>
    </location>
</feature>
<feature type="domain" description="BRCT" evidence="1">
    <location>
        <begin position="591"/>
        <end position="670"/>
    </location>
</feature>
<feature type="active site" description="N6-AMP-lysine intermediate" evidence="1">
    <location>
        <position position="115"/>
    </location>
</feature>
<feature type="binding site" evidence="1">
    <location>
        <begin position="35"/>
        <end position="39"/>
    </location>
    <ligand>
        <name>NAD(+)</name>
        <dbReference type="ChEBI" id="CHEBI:57540"/>
    </ligand>
</feature>
<feature type="binding site" evidence="1">
    <location>
        <begin position="84"/>
        <end position="85"/>
    </location>
    <ligand>
        <name>NAD(+)</name>
        <dbReference type="ChEBI" id="CHEBI:57540"/>
    </ligand>
</feature>
<feature type="binding site" evidence="1">
    <location>
        <position position="113"/>
    </location>
    <ligand>
        <name>NAD(+)</name>
        <dbReference type="ChEBI" id="CHEBI:57540"/>
    </ligand>
</feature>
<feature type="binding site" evidence="1">
    <location>
        <position position="136"/>
    </location>
    <ligand>
        <name>NAD(+)</name>
        <dbReference type="ChEBI" id="CHEBI:57540"/>
    </ligand>
</feature>
<feature type="binding site" evidence="1">
    <location>
        <position position="170"/>
    </location>
    <ligand>
        <name>NAD(+)</name>
        <dbReference type="ChEBI" id="CHEBI:57540"/>
    </ligand>
</feature>
<feature type="binding site" evidence="1">
    <location>
        <position position="285"/>
    </location>
    <ligand>
        <name>NAD(+)</name>
        <dbReference type="ChEBI" id="CHEBI:57540"/>
    </ligand>
</feature>
<feature type="binding site" evidence="1">
    <location>
        <position position="309"/>
    </location>
    <ligand>
        <name>NAD(+)</name>
        <dbReference type="ChEBI" id="CHEBI:57540"/>
    </ligand>
</feature>
<feature type="binding site" evidence="1">
    <location>
        <position position="403"/>
    </location>
    <ligand>
        <name>Zn(2+)</name>
        <dbReference type="ChEBI" id="CHEBI:29105"/>
    </ligand>
</feature>
<feature type="binding site" evidence="1">
    <location>
        <position position="406"/>
    </location>
    <ligand>
        <name>Zn(2+)</name>
        <dbReference type="ChEBI" id="CHEBI:29105"/>
    </ligand>
</feature>
<feature type="binding site" evidence="1">
    <location>
        <position position="421"/>
    </location>
    <ligand>
        <name>Zn(2+)</name>
        <dbReference type="ChEBI" id="CHEBI:29105"/>
    </ligand>
</feature>
<feature type="binding site" evidence="1">
    <location>
        <position position="426"/>
    </location>
    <ligand>
        <name>Zn(2+)</name>
        <dbReference type="ChEBI" id="CHEBI:29105"/>
    </ligand>
</feature>
<protein>
    <recommendedName>
        <fullName evidence="1">DNA ligase</fullName>
        <ecNumber evidence="1">6.5.1.2</ecNumber>
    </recommendedName>
    <alternativeName>
        <fullName evidence="1">Polydeoxyribonucleotide synthase [NAD(+)]</fullName>
    </alternativeName>
</protein>
<sequence length="670" mass="75821">MINLELIEKKIKDLTNQLNEANYEYYVKSNPKLTDQQYDALLKELLVLEKKFPQFTLPYSPTLKIGGFVEKKFSTVKHTSAMMSLANAFNLKELKAFYDRIAKKFSSFSMVSELKIDGVAVSLKYKKGILFQALTRGNGVWGEEITKNVQTIKQVPLKLTQPLDLEVRGEIYLSNSSFQKLNQQRKIAQQPLFSNPRNAASGTIRQLNSSIVAQRNLSIFIYSIQNPYLLKSTQEETLTFLASLGFSVNPYYKCSSSFEELEIKIQELEKLQQNLDYNTDGVVVKINELNLHDSIGKTTKSPKWAIAYKFATKNSESVVQEIIFQVGRSGMLTPVCKIIPVMVDGSLVSKVVLHNYDYICKKDIRLKDYVQVHKAGSVIPEIKEVIKSKRPSDSKPFAMITQCPSCHSLLNKNKGEVDYFCINKNCLEQKIQKLIHFVSKNAMDIDTLGNQTLITFFNQKLIENPSDIYLLKNNLDVLQKINGFGAKKVQNILTSVEKSKNKSLENVLFGLGIKHVGLKVSQVLTKHFDSIEILQKTTLENLESIKSIPEIGEKIALSLQKYFQNPLHLEEITKLKQLGVSFKSTTTSQIKAPNFFTNKKVVLTGSLQNYTRSQIKKLLIQKGAIINDALSSQTHLLITGANPGSKLQKAKTLNIQIIEEKELEELIQEK</sequence>